<sequence length="201" mass="21428">MAKRVTGPEIEKLIQLLAKVPGLGPRSARRAALHLVKKKEQLLGPLAEAMGEAHRKVKICSCCGNVDTIDPCTVCGDERRDQAVIIVVEDVADLWALERAGAMNAAYHVLGGTLSPLDGIGPEDLNIRALVDRVAKGGVRELIIAVNATVEGQTTAHYITDQLEGMEVRITRLAHGVPVGGELDYLDEGTLAAALRARTAI</sequence>
<feature type="chain" id="PRO_1000001615" description="Recombination protein RecR">
    <location>
        <begin position="1"/>
        <end position="201"/>
    </location>
</feature>
<feature type="domain" description="Toprim" evidence="1">
    <location>
        <begin position="83"/>
        <end position="178"/>
    </location>
</feature>
<feature type="zinc finger region" description="C4-type" evidence="1">
    <location>
        <begin position="60"/>
        <end position="75"/>
    </location>
</feature>
<keyword id="KW-0227">DNA damage</keyword>
<keyword id="KW-0233">DNA recombination</keyword>
<keyword id="KW-0234">DNA repair</keyword>
<keyword id="KW-0479">Metal-binding</keyword>
<keyword id="KW-0862">Zinc</keyword>
<keyword id="KW-0863">Zinc-finger</keyword>
<proteinExistence type="inferred from homology"/>
<gene>
    <name evidence="1" type="primary">recR</name>
    <name type="ordered locus">Smed_3435</name>
</gene>
<comment type="function">
    <text evidence="1">May play a role in DNA repair. It seems to be involved in an RecBC-independent recombinational process of DNA repair. It may act with RecF and RecO.</text>
</comment>
<comment type="similarity">
    <text evidence="1">Belongs to the RecR family.</text>
</comment>
<evidence type="ECO:0000255" key="1">
    <source>
        <dbReference type="HAMAP-Rule" id="MF_00017"/>
    </source>
</evidence>
<name>RECR_SINMW</name>
<protein>
    <recommendedName>
        <fullName evidence="1">Recombination protein RecR</fullName>
    </recommendedName>
</protein>
<reference key="1">
    <citation type="submission" date="2007-06" db="EMBL/GenBank/DDBJ databases">
        <title>Complete sequence of Sinorhizobium medicae WSM419 chromosome.</title>
        <authorList>
            <consortium name="US DOE Joint Genome Institute"/>
            <person name="Copeland A."/>
            <person name="Lucas S."/>
            <person name="Lapidus A."/>
            <person name="Barry K."/>
            <person name="Glavina del Rio T."/>
            <person name="Dalin E."/>
            <person name="Tice H."/>
            <person name="Pitluck S."/>
            <person name="Chain P."/>
            <person name="Malfatti S."/>
            <person name="Shin M."/>
            <person name="Vergez L."/>
            <person name="Schmutz J."/>
            <person name="Larimer F."/>
            <person name="Land M."/>
            <person name="Hauser L."/>
            <person name="Kyrpides N."/>
            <person name="Mikhailova N."/>
            <person name="Reeve W.G."/>
            <person name="Richardson P."/>
        </authorList>
    </citation>
    <scope>NUCLEOTIDE SEQUENCE [LARGE SCALE GENOMIC DNA]</scope>
    <source>
        <strain>WSM419</strain>
    </source>
</reference>
<accession>A6UF23</accession>
<dbReference type="EMBL" id="CP000738">
    <property type="protein sequence ID" value="ABR62253.1"/>
    <property type="molecule type" value="Genomic_DNA"/>
</dbReference>
<dbReference type="RefSeq" id="WP_012067633.1">
    <property type="nucleotide sequence ID" value="NC_009636.1"/>
</dbReference>
<dbReference type="RefSeq" id="YP_001329088.1">
    <property type="nucleotide sequence ID" value="NC_009636.1"/>
</dbReference>
<dbReference type="SMR" id="A6UF23"/>
<dbReference type="STRING" id="366394.Smed_3435"/>
<dbReference type="GeneID" id="61610986"/>
<dbReference type="KEGG" id="smd:Smed_3435"/>
<dbReference type="PATRIC" id="fig|366394.8.peg.6684"/>
<dbReference type="eggNOG" id="COG0353">
    <property type="taxonomic scope" value="Bacteria"/>
</dbReference>
<dbReference type="HOGENOM" id="CLU_060739_1_1_5"/>
<dbReference type="OrthoDB" id="9802672at2"/>
<dbReference type="Proteomes" id="UP000001108">
    <property type="component" value="Chromosome"/>
</dbReference>
<dbReference type="GO" id="GO:0003677">
    <property type="term" value="F:DNA binding"/>
    <property type="evidence" value="ECO:0007669"/>
    <property type="project" value="UniProtKB-UniRule"/>
</dbReference>
<dbReference type="GO" id="GO:0008270">
    <property type="term" value="F:zinc ion binding"/>
    <property type="evidence" value="ECO:0007669"/>
    <property type="project" value="UniProtKB-KW"/>
</dbReference>
<dbReference type="GO" id="GO:0006310">
    <property type="term" value="P:DNA recombination"/>
    <property type="evidence" value="ECO:0007669"/>
    <property type="project" value="UniProtKB-UniRule"/>
</dbReference>
<dbReference type="GO" id="GO:0006281">
    <property type="term" value="P:DNA repair"/>
    <property type="evidence" value="ECO:0007669"/>
    <property type="project" value="UniProtKB-UniRule"/>
</dbReference>
<dbReference type="CDD" id="cd01025">
    <property type="entry name" value="TOPRIM_recR"/>
    <property type="match status" value="1"/>
</dbReference>
<dbReference type="Gene3D" id="3.40.1360.10">
    <property type="match status" value="1"/>
</dbReference>
<dbReference type="Gene3D" id="6.10.250.240">
    <property type="match status" value="1"/>
</dbReference>
<dbReference type="Gene3D" id="1.10.8.420">
    <property type="entry name" value="RecR Domain 1"/>
    <property type="match status" value="1"/>
</dbReference>
<dbReference type="HAMAP" id="MF_00017">
    <property type="entry name" value="RecR"/>
    <property type="match status" value="1"/>
</dbReference>
<dbReference type="InterPro" id="IPR000093">
    <property type="entry name" value="DNA_Rcmb_RecR"/>
</dbReference>
<dbReference type="InterPro" id="IPR023627">
    <property type="entry name" value="Rcmb_RecR"/>
</dbReference>
<dbReference type="InterPro" id="IPR015967">
    <property type="entry name" value="Rcmb_RecR_Znf"/>
</dbReference>
<dbReference type="InterPro" id="IPR006171">
    <property type="entry name" value="TOPRIM_dom"/>
</dbReference>
<dbReference type="InterPro" id="IPR034137">
    <property type="entry name" value="TOPRIM_RecR"/>
</dbReference>
<dbReference type="NCBIfam" id="TIGR00615">
    <property type="entry name" value="recR"/>
    <property type="match status" value="1"/>
</dbReference>
<dbReference type="PANTHER" id="PTHR30446">
    <property type="entry name" value="RECOMBINATION PROTEIN RECR"/>
    <property type="match status" value="1"/>
</dbReference>
<dbReference type="PANTHER" id="PTHR30446:SF0">
    <property type="entry name" value="RECOMBINATION PROTEIN RECR"/>
    <property type="match status" value="1"/>
</dbReference>
<dbReference type="Pfam" id="PF21175">
    <property type="entry name" value="RecR_C"/>
    <property type="match status" value="1"/>
</dbReference>
<dbReference type="Pfam" id="PF21176">
    <property type="entry name" value="RecR_HhH"/>
    <property type="match status" value="1"/>
</dbReference>
<dbReference type="Pfam" id="PF13662">
    <property type="entry name" value="Toprim_4"/>
    <property type="match status" value="1"/>
</dbReference>
<dbReference type="SMART" id="SM00493">
    <property type="entry name" value="TOPRIM"/>
    <property type="match status" value="1"/>
</dbReference>
<dbReference type="SUPFAM" id="SSF111304">
    <property type="entry name" value="Recombination protein RecR"/>
    <property type="match status" value="1"/>
</dbReference>
<dbReference type="PROSITE" id="PS01300">
    <property type="entry name" value="RECR"/>
    <property type="match status" value="1"/>
</dbReference>
<dbReference type="PROSITE" id="PS50880">
    <property type="entry name" value="TOPRIM"/>
    <property type="match status" value="1"/>
</dbReference>
<organism>
    <name type="scientific">Sinorhizobium medicae (strain WSM419)</name>
    <name type="common">Ensifer medicae</name>
    <dbReference type="NCBI Taxonomy" id="366394"/>
    <lineage>
        <taxon>Bacteria</taxon>
        <taxon>Pseudomonadati</taxon>
        <taxon>Pseudomonadota</taxon>
        <taxon>Alphaproteobacteria</taxon>
        <taxon>Hyphomicrobiales</taxon>
        <taxon>Rhizobiaceae</taxon>
        <taxon>Sinorhizobium/Ensifer group</taxon>
        <taxon>Sinorhizobium</taxon>
    </lineage>
</organism>